<organism>
    <name type="scientific">Xanthomonas campestris pv. campestris (strain 8004)</name>
    <dbReference type="NCBI Taxonomy" id="314565"/>
    <lineage>
        <taxon>Bacteria</taxon>
        <taxon>Pseudomonadati</taxon>
        <taxon>Pseudomonadota</taxon>
        <taxon>Gammaproteobacteria</taxon>
        <taxon>Lysobacterales</taxon>
        <taxon>Lysobacteraceae</taxon>
        <taxon>Xanthomonas</taxon>
    </lineage>
</organism>
<sequence>MANRIKKGDQVVINTGKDKGKQGEVVRVEGDRVIVSNANVIKRHTKPNPQAGVAGGVVEREASIHISNVNIVNPATGKGERVGFKVLEDGRKLRVFRSSGEALDA</sequence>
<dbReference type="EMBL" id="CP000050">
    <property type="protein sequence ID" value="AAY50373.1"/>
    <property type="molecule type" value="Genomic_DNA"/>
</dbReference>
<dbReference type="RefSeq" id="WP_008571669.1">
    <property type="nucleotide sequence ID" value="NZ_CP155948.1"/>
</dbReference>
<dbReference type="SMR" id="Q4URF0"/>
<dbReference type="GeneID" id="97509347"/>
<dbReference type="KEGG" id="xcb:XC_3329"/>
<dbReference type="HOGENOM" id="CLU_093315_2_2_6"/>
<dbReference type="Proteomes" id="UP000000420">
    <property type="component" value="Chromosome"/>
</dbReference>
<dbReference type="GO" id="GO:1990904">
    <property type="term" value="C:ribonucleoprotein complex"/>
    <property type="evidence" value="ECO:0007669"/>
    <property type="project" value="UniProtKB-KW"/>
</dbReference>
<dbReference type="GO" id="GO:0005840">
    <property type="term" value="C:ribosome"/>
    <property type="evidence" value="ECO:0007669"/>
    <property type="project" value="UniProtKB-KW"/>
</dbReference>
<dbReference type="GO" id="GO:0019843">
    <property type="term" value="F:rRNA binding"/>
    <property type="evidence" value="ECO:0007669"/>
    <property type="project" value="UniProtKB-UniRule"/>
</dbReference>
<dbReference type="GO" id="GO:0003735">
    <property type="term" value="F:structural constituent of ribosome"/>
    <property type="evidence" value="ECO:0007669"/>
    <property type="project" value="InterPro"/>
</dbReference>
<dbReference type="GO" id="GO:0006412">
    <property type="term" value="P:translation"/>
    <property type="evidence" value="ECO:0007669"/>
    <property type="project" value="UniProtKB-UniRule"/>
</dbReference>
<dbReference type="CDD" id="cd06089">
    <property type="entry name" value="KOW_RPL26"/>
    <property type="match status" value="1"/>
</dbReference>
<dbReference type="FunFam" id="2.30.30.30:FF:000004">
    <property type="entry name" value="50S ribosomal protein L24"/>
    <property type="match status" value="1"/>
</dbReference>
<dbReference type="Gene3D" id="2.30.30.30">
    <property type="match status" value="1"/>
</dbReference>
<dbReference type="HAMAP" id="MF_01326_B">
    <property type="entry name" value="Ribosomal_uL24_B"/>
    <property type="match status" value="1"/>
</dbReference>
<dbReference type="InterPro" id="IPR005824">
    <property type="entry name" value="KOW"/>
</dbReference>
<dbReference type="InterPro" id="IPR014722">
    <property type="entry name" value="Rib_uL2_dom2"/>
</dbReference>
<dbReference type="InterPro" id="IPR003256">
    <property type="entry name" value="Ribosomal_uL24"/>
</dbReference>
<dbReference type="InterPro" id="IPR041988">
    <property type="entry name" value="Ribosomal_uL24_KOW"/>
</dbReference>
<dbReference type="InterPro" id="IPR008991">
    <property type="entry name" value="Translation_prot_SH3-like_sf"/>
</dbReference>
<dbReference type="NCBIfam" id="TIGR01079">
    <property type="entry name" value="rplX_bact"/>
    <property type="match status" value="1"/>
</dbReference>
<dbReference type="PANTHER" id="PTHR12903">
    <property type="entry name" value="MITOCHONDRIAL RIBOSOMAL PROTEIN L24"/>
    <property type="match status" value="1"/>
</dbReference>
<dbReference type="Pfam" id="PF00467">
    <property type="entry name" value="KOW"/>
    <property type="match status" value="1"/>
</dbReference>
<dbReference type="Pfam" id="PF17136">
    <property type="entry name" value="ribosomal_L24"/>
    <property type="match status" value="1"/>
</dbReference>
<dbReference type="SMART" id="SM00739">
    <property type="entry name" value="KOW"/>
    <property type="match status" value="1"/>
</dbReference>
<dbReference type="SUPFAM" id="SSF50104">
    <property type="entry name" value="Translation proteins SH3-like domain"/>
    <property type="match status" value="1"/>
</dbReference>
<evidence type="ECO:0000255" key="1">
    <source>
        <dbReference type="HAMAP-Rule" id="MF_01326"/>
    </source>
</evidence>
<evidence type="ECO:0000305" key="2"/>
<name>RL24_XANC8</name>
<feature type="chain" id="PRO_0000241687" description="Large ribosomal subunit protein uL24">
    <location>
        <begin position="1"/>
        <end position="105"/>
    </location>
</feature>
<accession>Q4URF0</accession>
<proteinExistence type="inferred from homology"/>
<comment type="function">
    <text evidence="1">One of two assembly initiator proteins, it binds directly to the 5'-end of the 23S rRNA, where it nucleates assembly of the 50S subunit.</text>
</comment>
<comment type="function">
    <text evidence="1">One of the proteins that surrounds the polypeptide exit tunnel on the outside of the subunit.</text>
</comment>
<comment type="subunit">
    <text evidence="1">Part of the 50S ribosomal subunit.</text>
</comment>
<comment type="similarity">
    <text evidence="1">Belongs to the universal ribosomal protein uL24 family.</text>
</comment>
<reference key="1">
    <citation type="journal article" date="2005" name="Genome Res.">
        <title>Comparative and functional genomic analyses of the pathogenicity of phytopathogen Xanthomonas campestris pv. campestris.</title>
        <authorList>
            <person name="Qian W."/>
            <person name="Jia Y."/>
            <person name="Ren S.-X."/>
            <person name="He Y.-Q."/>
            <person name="Feng J.-X."/>
            <person name="Lu L.-F."/>
            <person name="Sun Q."/>
            <person name="Ying G."/>
            <person name="Tang D.-J."/>
            <person name="Tang H."/>
            <person name="Wu W."/>
            <person name="Hao P."/>
            <person name="Wang L."/>
            <person name="Jiang B.-L."/>
            <person name="Zeng S."/>
            <person name="Gu W.-Y."/>
            <person name="Lu G."/>
            <person name="Rong L."/>
            <person name="Tian Y."/>
            <person name="Yao Z."/>
            <person name="Fu G."/>
            <person name="Chen B."/>
            <person name="Fang R."/>
            <person name="Qiang B."/>
            <person name="Chen Z."/>
            <person name="Zhao G.-P."/>
            <person name="Tang J.-L."/>
            <person name="He C."/>
        </authorList>
    </citation>
    <scope>NUCLEOTIDE SEQUENCE [LARGE SCALE GENOMIC DNA]</scope>
    <source>
        <strain>8004</strain>
    </source>
</reference>
<gene>
    <name evidence="1" type="primary">rplX</name>
    <name type="ordered locus">XC_3329</name>
</gene>
<keyword id="KW-0687">Ribonucleoprotein</keyword>
<keyword id="KW-0689">Ribosomal protein</keyword>
<keyword id="KW-0694">RNA-binding</keyword>
<keyword id="KW-0699">rRNA-binding</keyword>
<protein>
    <recommendedName>
        <fullName evidence="1">Large ribosomal subunit protein uL24</fullName>
    </recommendedName>
    <alternativeName>
        <fullName evidence="2">50S ribosomal protein L24</fullName>
    </alternativeName>
</protein>